<evidence type="ECO:0000250" key="1">
    <source>
        <dbReference type="UniProtKB" id="O24529"/>
    </source>
</evidence>
<evidence type="ECO:0000255" key="2">
    <source>
        <dbReference type="PROSITE-ProRule" id="PRU01020"/>
    </source>
</evidence>
<evidence type="ECO:0000269" key="3">
    <source>
    </source>
</evidence>
<evidence type="ECO:0000303" key="4">
    <source>
    </source>
</evidence>
<evidence type="ECO:0000305" key="5"/>
<evidence type="ECO:0000312" key="6">
    <source>
        <dbReference type="EMBL" id="AAM97497.1"/>
    </source>
</evidence>
<accession>Q8GSN1</accession>
<protein>
    <recommendedName>
        <fullName>Myricetin O-methyltransferase</fullName>
        <ecNumber>2.1.1.267</ecNumber>
    </recommendedName>
    <alternativeName>
        <fullName evidence="4">CrOMT2</fullName>
    </alternativeName>
    <alternativeName>
        <fullName evidence="6">Flavonoid O-methyltransferase</fullName>
    </alternativeName>
</protein>
<feature type="chain" id="PRO_0000405018" description="Myricetin O-methyltransferase">
    <location>
        <begin position="1"/>
        <end position="348"/>
    </location>
</feature>
<feature type="active site" description="Proton acceptor" evidence="1 2">
    <location>
        <position position="250"/>
    </location>
</feature>
<feature type="binding site" evidence="1 2">
    <location>
        <position position="189"/>
    </location>
    <ligand>
        <name>S-adenosyl-L-methionine</name>
        <dbReference type="ChEBI" id="CHEBI:59789"/>
    </ligand>
</feature>
<feature type="binding site" evidence="1 2">
    <location>
        <position position="212"/>
    </location>
    <ligand>
        <name>S-adenosyl-L-methionine</name>
        <dbReference type="ChEBI" id="CHEBI:59789"/>
    </ligand>
</feature>
<feature type="binding site" evidence="1 2">
    <location>
        <position position="232"/>
    </location>
    <ligand>
        <name>S-adenosyl-L-methionine</name>
        <dbReference type="ChEBI" id="CHEBI:59789"/>
    </ligand>
</feature>
<feature type="binding site" evidence="1 2">
    <location>
        <position position="233"/>
    </location>
    <ligand>
        <name>S-adenosyl-L-methionine</name>
        <dbReference type="ChEBI" id="CHEBI:59789"/>
    </ligand>
</feature>
<feature type="binding site" evidence="1 2">
    <location>
        <position position="246"/>
    </location>
    <ligand>
        <name>S-adenosyl-L-methionine</name>
        <dbReference type="ChEBI" id="CHEBI:59789"/>
    </ligand>
</feature>
<feature type="modified residue" description="N-acetylmethionine" evidence="3">
    <location>
        <position position="1"/>
    </location>
</feature>
<reference evidence="5 6" key="1">
    <citation type="journal article" date="2003" name="Phytochemistry">
        <title>A flavonol O-methyltransferase from Catharanthus roseus performing two sequential methylations.</title>
        <authorList>
            <person name="Cacace S."/>
            <person name="Schroder G."/>
            <person name="Wehinger E."/>
            <person name="Strack D."/>
            <person name="Schmidt J."/>
            <person name="Schroder J."/>
        </authorList>
    </citation>
    <scope>NUCLEOTIDE SEQUENCE [GENOMIC DNA]</scope>
    <scope>PROTEIN SEQUENCE OF 119-130; 142-151; 170-194; 290-297 AND 334-341</scope>
    <scope>FUNCTION</scope>
    <scope>CATALYTIC ACTIVITY</scope>
    <scope>ACETYLATION AT MET-1</scope>
    <scope>MASS SPECTROMETRY</scope>
</reference>
<name>MOMT_CATRO</name>
<proteinExistence type="evidence at protein level"/>
<organism>
    <name type="scientific">Catharanthus roseus</name>
    <name type="common">Madagascar periwinkle</name>
    <name type="synonym">Vinca rosea</name>
    <dbReference type="NCBI Taxonomy" id="4058"/>
    <lineage>
        <taxon>Eukaryota</taxon>
        <taxon>Viridiplantae</taxon>
        <taxon>Streptophyta</taxon>
        <taxon>Embryophyta</taxon>
        <taxon>Tracheophyta</taxon>
        <taxon>Spermatophyta</taxon>
        <taxon>Magnoliopsida</taxon>
        <taxon>eudicotyledons</taxon>
        <taxon>Gunneridae</taxon>
        <taxon>Pentapetalae</taxon>
        <taxon>asterids</taxon>
        <taxon>lamiids</taxon>
        <taxon>Gentianales</taxon>
        <taxon>Apocynaceae</taxon>
        <taxon>Rauvolfioideae</taxon>
        <taxon>Vinceae</taxon>
        <taxon>Catharanthinae</taxon>
        <taxon>Catharanthus</taxon>
    </lineage>
</organism>
<keyword id="KW-0007">Acetylation</keyword>
<keyword id="KW-0903">Direct protein sequencing</keyword>
<keyword id="KW-0489">Methyltransferase</keyword>
<keyword id="KW-0949">S-adenosyl-L-methionine</keyword>
<keyword id="KW-0808">Transferase</keyword>
<comment type="function">
    <text evidence="3">Methylates myricetin and dihydromyricetin at 2 sites. Inactive towards 16-hydroxytabersonine, the phenylpropanoids 5-hydroxyferulate, caffeate and their CoA-esters, flavones and flavanones possessing 2 or 3 B-ring hydroxyl groups.</text>
</comment>
<comment type="catalytic activity">
    <reaction evidence="3">
        <text>S-adenosyl-L-methionine + a 3'-hydroxyflavonoid = S-adenosyl-L-homocysteine + a 3'-methoxyflavonoid.</text>
        <dbReference type="EC" id="2.1.1.267"/>
    </reaction>
</comment>
<comment type="catalytic activity">
    <reaction evidence="3">
        <text>S-adenosyl-L-methionine + a 5'-hydroxy-3'-methoxyflavonoid = S-adenosyl-L-homocysteine + a 3',5'-dimethoxyflavonoid.</text>
        <dbReference type="EC" id="2.1.1.267"/>
    </reaction>
</comment>
<comment type="PTM">
    <text evidence="3">The N-terminus is blocked.</text>
</comment>
<comment type="mass spectrometry" mass="39191.0" error="3.0" method="Unknown" evidence="3"/>
<comment type="similarity">
    <text evidence="2">Belongs to the class I-like SAM-binding methyltransferase superfamily. Cation-independent O-methyltransferase family. COMT subfamily.</text>
</comment>
<dbReference type="EC" id="2.1.1.267"/>
<dbReference type="EMBL" id="AY127568">
    <property type="protein sequence ID" value="AAM97497.1"/>
    <property type="molecule type" value="Genomic_DNA"/>
</dbReference>
<dbReference type="SMR" id="Q8GSN1"/>
<dbReference type="iPTMnet" id="Q8GSN1"/>
<dbReference type="KEGG" id="ag:AAM97497"/>
<dbReference type="OrthoDB" id="1606438at2759"/>
<dbReference type="BioCyc" id="MetaCyc:MONOMER-12684"/>
<dbReference type="BRENDA" id="2.1.1.267">
    <property type="organism ID" value="1211"/>
</dbReference>
<dbReference type="GO" id="GO:0033799">
    <property type="term" value="F:myricetin 3'-O-methyltransferase activity"/>
    <property type="evidence" value="ECO:0000314"/>
    <property type="project" value="UniProtKB"/>
</dbReference>
<dbReference type="GO" id="GO:0046983">
    <property type="term" value="F:protein dimerization activity"/>
    <property type="evidence" value="ECO:0007669"/>
    <property type="project" value="InterPro"/>
</dbReference>
<dbReference type="GO" id="GO:0032259">
    <property type="term" value="P:methylation"/>
    <property type="evidence" value="ECO:0007669"/>
    <property type="project" value="UniProtKB-KW"/>
</dbReference>
<dbReference type="CDD" id="cd02440">
    <property type="entry name" value="AdoMet_MTases"/>
    <property type="match status" value="1"/>
</dbReference>
<dbReference type="FunFam" id="1.10.10.10:FF:000213">
    <property type="entry name" value="Coniferyl alcohol 9-O-methyltransferase"/>
    <property type="match status" value="1"/>
</dbReference>
<dbReference type="FunFam" id="3.40.50.150:FF:000057">
    <property type="entry name" value="O-methyltransferase ZRP4"/>
    <property type="match status" value="1"/>
</dbReference>
<dbReference type="Gene3D" id="3.40.50.150">
    <property type="entry name" value="Vaccinia Virus protein VP39"/>
    <property type="match status" value="1"/>
</dbReference>
<dbReference type="Gene3D" id="1.10.10.10">
    <property type="entry name" value="Winged helix-like DNA-binding domain superfamily/Winged helix DNA-binding domain"/>
    <property type="match status" value="1"/>
</dbReference>
<dbReference type="InterPro" id="IPR016461">
    <property type="entry name" value="COMT-like"/>
</dbReference>
<dbReference type="InterPro" id="IPR001077">
    <property type="entry name" value="O_MeTrfase_dom"/>
</dbReference>
<dbReference type="InterPro" id="IPR012967">
    <property type="entry name" value="Plant_O-MeTrfase_dimerisation"/>
</dbReference>
<dbReference type="InterPro" id="IPR029063">
    <property type="entry name" value="SAM-dependent_MTases_sf"/>
</dbReference>
<dbReference type="InterPro" id="IPR036388">
    <property type="entry name" value="WH-like_DNA-bd_sf"/>
</dbReference>
<dbReference type="InterPro" id="IPR036390">
    <property type="entry name" value="WH_DNA-bd_sf"/>
</dbReference>
<dbReference type="PANTHER" id="PTHR11746">
    <property type="entry name" value="O-METHYLTRANSFERASE"/>
    <property type="match status" value="1"/>
</dbReference>
<dbReference type="Pfam" id="PF08100">
    <property type="entry name" value="Dimerisation"/>
    <property type="match status" value="1"/>
</dbReference>
<dbReference type="Pfam" id="PF00891">
    <property type="entry name" value="Methyltransf_2"/>
    <property type="match status" value="1"/>
</dbReference>
<dbReference type="PIRSF" id="PIRSF005739">
    <property type="entry name" value="O-mtase"/>
    <property type="match status" value="1"/>
</dbReference>
<dbReference type="SUPFAM" id="SSF53335">
    <property type="entry name" value="S-adenosyl-L-methionine-dependent methyltransferases"/>
    <property type="match status" value="1"/>
</dbReference>
<dbReference type="SUPFAM" id="SSF46785">
    <property type="entry name" value="Winged helix' DNA-binding domain"/>
    <property type="match status" value="1"/>
</dbReference>
<dbReference type="PROSITE" id="PS51683">
    <property type="entry name" value="SAM_OMT_II"/>
    <property type="match status" value="1"/>
</dbReference>
<sequence length="348" mass="39145">MELQSSEIRNAQAHFFTQVFSFTSMSSLKCAVQLGIPDAIHSHGKPMALSDLTNSLPINPSKAPYIYRLMRILVAAGYFSEEEKNVYSLTPFTRLLLKNDPLNSISMVLGVNQIAELKAWNAMSEWFQNEDLTAFETAHGKNFWDFGAEDKYGKNFDGVMAADSILVSKMLIPEFNYLFEGLDSLVDVGGGTGTIAKAIAKSFPDLKCTVFDLPHVVANLESTENLEFVGGDMFEKIPSANAILLKWILHDWKDEECVKVLKMCRKAIPEKEKGGKVILIETVLMDSKKHENEEAVKAQISSDIDMMVFFTAKERTEEEWATLFREAGFSGYKIFPMIDFRSPIEVYP</sequence>